<evidence type="ECO:0000255" key="1"/>
<evidence type="ECO:0000269" key="2">
    <source>
    </source>
</evidence>
<evidence type="ECO:0007829" key="3">
    <source>
        <dbReference type="PDB" id="3D30"/>
    </source>
</evidence>
<sequence>MKKIMSAFVGMVLLTIFCFSPQASAAYDDLHEGYATYTGSGYSGGAFLLDPIPSDMEITAINPADLNYGGVKAALAGSYLEVEGPKGKTTVYVTDLYPEGARGALDLSPNAFRKIGNMKDGKINIKWRVVKAPITGNFTYRIKEGSSRWWAAIQVRNHKYPVMKMEYEKDGKWINMEKMDYNHFVSTNLGTGSLKVRMTDIRGKVVKDTIPKLPESGTSKAYTVPGHVQFPE</sequence>
<organism>
    <name type="scientific">Bacillus subtilis (strain 168)</name>
    <dbReference type="NCBI Taxonomy" id="224308"/>
    <lineage>
        <taxon>Bacteria</taxon>
        <taxon>Bacillati</taxon>
        <taxon>Bacillota</taxon>
        <taxon>Bacilli</taxon>
        <taxon>Bacillales</taxon>
        <taxon>Bacillaceae</taxon>
        <taxon>Bacillus</taxon>
    </lineage>
</organism>
<reference key="1">
    <citation type="submission" date="1997-10" db="EMBL/GenBank/DDBJ databases">
        <title>Sequence analysis of the Bacillus subtilis chromosome region between the terC and odhAB loci cloned in a yeast artificial chromosome.</title>
        <authorList>
            <person name="Lapidus A."/>
            <person name="Galleron N."/>
            <person name="Sorokin A."/>
            <person name="Ehrlich S.D."/>
        </authorList>
    </citation>
    <scope>NUCLEOTIDE SEQUENCE [GENOMIC DNA]</scope>
</reference>
<reference key="2">
    <citation type="journal article" date="1997" name="Nature">
        <title>The complete genome sequence of the Gram-positive bacterium Bacillus subtilis.</title>
        <authorList>
            <person name="Kunst F."/>
            <person name="Ogasawara N."/>
            <person name="Moszer I."/>
            <person name="Albertini A.M."/>
            <person name="Alloni G."/>
            <person name="Azevedo V."/>
            <person name="Bertero M.G."/>
            <person name="Bessieres P."/>
            <person name="Bolotin A."/>
            <person name="Borchert S."/>
            <person name="Borriss R."/>
            <person name="Boursier L."/>
            <person name="Brans A."/>
            <person name="Braun M."/>
            <person name="Brignell S.C."/>
            <person name="Bron S."/>
            <person name="Brouillet S."/>
            <person name="Bruschi C.V."/>
            <person name="Caldwell B."/>
            <person name="Capuano V."/>
            <person name="Carter N.M."/>
            <person name="Choi S.-K."/>
            <person name="Codani J.-J."/>
            <person name="Connerton I.F."/>
            <person name="Cummings N.J."/>
            <person name="Daniel R.A."/>
            <person name="Denizot F."/>
            <person name="Devine K.M."/>
            <person name="Duesterhoeft A."/>
            <person name="Ehrlich S.D."/>
            <person name="Emmerson P.T."/>
            <person name="Entian K.-D."/>
            <person name="Errington J."/>
            <person name="Fabret C."/>
            <person name="Ferrari E."/>
            <person name="Foulger D."/>
            <person name="Fritz C."/>
            <person name="Fujita M."/>
            <person name="Fujita Y."/>
            <person name="Fuma S."/>
            <person name="Galizzi A."/>
            <person name="Galleron N."/>
            <person name="Ghim S.-Y."/>
            <person name="Glaser P."/>
            <person name="Goffeau A."/>
            <person name="Golightly E.J."/>
            <person name="Grandi G."/>
            <person name="Guiseppi G."/>
            <person name="Guy B.J."/>
            <person name="Haga K."/>
            <person name="Haiech J."/>
            <person name="Harwood C.R."/>
            <person name="Henaut A."/>
            <person name="Hilbert H."/>
            <person name="Holsappel S."/>
            <person name="Hosono S."/>
            <person name="Hullo M.-F."/>
            <person name="Itaya M."/>
            <person name="Jones L.-M."/>
            <person name="Joris B."/>
            <person name="Karamata D."/>
            <person name="Kasahara Y."/>
            <person name="Klaerr-Blanchard M."/>
            <person name="Klein C."/>
            <person name="Kobayashi Y."/>
            <person name="Koetter P."/>
            <person name="Koningstein G."/>
            <person name="Krogh S."/>
            <person name="Kumano M."/>
            <person name="Kurita K."/>
            <person name="Lapidus A."/>
            <person name="Lardinois S."/>
            <person name="Lauber J."/>
            <person name="Lazarevic V."/>
            <person name="Lee S.-M."/>
            <person name="Levine A."/>
            <person name="Liu H."/>
            <person name="Masuda S."/>
            <person name="Mauel C."/>
            <person name="Medigue C."/>
            <person name="Medina N."/>
            <person name="Mellado R.P."/>
            <person name="Mizuno M."/>
            <person name="Moestl D."/>
            <person name="Nakai S."/>
            <person name="Noback M."/>
            <person name="Noone D."/>
            <person name="O'Reilly M."/>
            <person name="Ogawa K."/>
            <person name="Ogiwara A."/>
            <person name="Oudega B."/>
            <person name="Park S.-H."/>
            <person name="Parro V."/>
            <person name="Pohl T.M."/>
            <person name="Portetelle D."/>
            <person name="Porwollik S."/>
            <person name="Prescott A.M."/>
            <person name="Presecan E."/>
            <person name="Pujic P."/>
            <person name="Purnelle B."/>
            <person name="Rapoport G."/>
            <person name="Rey M."/>
            <person name="Reynolds S."/>
            <person name="Rieger M."/>
            <person name="Rivolta C."/>
            <person name="Rocha E."/>
            <person name="Roche B."/>
            <person name="Rose M."/>
            <person name="Sadaie Y."/>
            <person name="Sato T."/>
            <person name="Scanlan E."/>
            <person name="Schleich S."/>
            <person name="Schroeter R."/>
            <person name="Scoffone F."/>
            <person name="Sekiguchi J."/>
            <person name="Sekowska A."/>
            <person name="Seror S.J."/>
            <person name="Serror P."/>
            <person name="Shin B.-S."/>
            <person name="Soldo B."/>
            <person name="Sorokin A."/>
            <person name="Tacconi E."/>
            <person name="Takagi T."/>
            <person name="Takahashi H."/>
            <person name="Takemaru K."/>
            <person name="Takeuchi M."/>
            <person name="Tamakoshi A."/>
            <person name="Tanaka T."/>
            <person name="Terpstra P."/>
            <person name="Tognoni A."/>
            <person name="Tosato V."/>
            <person name="Uchiyama S."/>
            <person name="Vandenbol M."/>
            <person name="Vannier F."/>
            <person name="Vassarotti A."/>
            <person name="Viari A."/>
            <person name="Wambutt R."/>
            <person name="Wedler E."/>
            <person name="Wedler H."/>
            <person name="Weitzenegger T."/>
            <person name="Winters P."/>
            <person name="Wipat A."/>
            <person name="Yamamoto H."/>
            <person name="Yamane K."/>
            <person name="Yasumoto K."/>
            <person name="Yata K."/>
            <person name="Yoshida K."/>
            <person name="Yoshikawa H.-F."/>
            <person name="Zumstein E."/>
            <person name="Yoshikawa H."/>
            <person name="Danchin A."/>
        </authorList>
    </citation>
    <scope>NUCLEOTIDE SEQUENCE [LARGE SCALE GENOMIC DNA]</scope>
    <source>
        <strain>168</strain>
    </source>
</reference>
<reference key="3">
    <citation type="journal article" date="2008" name="Proc. Natl. Acad. Sci. U.S.A.">
        <title>Crystal structure and activity of Bacillus subtilis YoaJ (EXLX1), a bacterial expansin that promotes root colonization.</title>
        <authorList>
            <person name="Kerff F."/>
            <person name="Amoroso A."/>
            <person name="Herman R."/>
            <person name="Sauvage E."/>
            <person name="Petrella S."/>
            <person name="Filee P."/>
            <person name="Charlier P."/>
            <person name="Joris B."/>
            <person name="Tabuchi A."/>
            <person name="Nikolaidis N."/>
            <person name="Cosgrove D.J."/>
        </authorList>
    </citation>
    <scope>X-RAY CRYSTALLOGRAPHY (2.5 ANGSTROMS) OF 26-232</scope>
    <scope>FUNCTION</scope>
    <scope>SUBCELLULAR LOCATION</scope>
</reference>
<proteinExistence type="evidence at protein level"/>
<feature type="signal peptide" evidence="1">
    <location>
        <begin position="1"/>
        <end position="25"/>
    </location>
</feature>
<feature type="chain" id="PRO_0000359936" description="Expansin-YoaJ">
    <location>
        <begin position="26"/>
        <end position="232"/>
    </location>
</feature>
<feature type="domain" description="Expansin-like EG45">
    <location>
        <begin position="58"/>
        <end position="127"/>
    </location>
</feature>
<feature type="strand" evidence="3">
    <location>
        <begin position="31"/>
        <end position="37"/>
    </location>
</feature>
<feature type="strand" evidence="3">
    <location>
        <begin position="42"/>
        <end position="44"/>
    </location>
</feature>
<feature type="strand" evidence="3">
    <location>
        <begin position="58"/>
        <end position="61"/>
    </location>
</feature>
<feature type="helix" evidence="3">
    <location>
        <begin position="63"/>
        <end position="66"/>
    </location>
</feature>
<feature type="helix" evidence="3">
    <location>
        <begin position="68"/>
        <end position="70"/>
    </location>
</feature>
<feature type="turn" evidence="3">
    <location>
        <begin position="72"/>
        <end position="77"/>
    </location>
</feature>
<feature type="strand" evidence="3">
    <location>
        <begin position="79"/>
        <end position="84"/>
    </location>
</feature>
<feature type="strand" evidence="3">
    <location>
        <begin position="87"/>
        <end position="96"/>
    </location>
</feature>
<feature type="strand" evidence="3">
    <location>
        <begin position="105"/>
        <end position="107"/>
    </location>
</feature>
<feature type="helix" evidence="3">
    <location>
        <begin position="109"/>
        <end position="115"/>
    </location>
</feature>
<feature type="helix" evidence="3">
    <location>
        <begin position="118"/>
        <end position="120"/>
    </location>
</feature>
<feature type="strand" evidence="3">
    <location>
        <begin position="121"/>
        <end position="130"/>
    </location>
</feature>
<feature type="strand" evidence="3">
    <location>
        <begin position="139"/>
        <end position="142"/>
    </location>
</feature>
<feature type="strand" evidence="3">
    <location>
        <begin position="147"/>
        <end position="157"/>
    </location>
</feature>
<feature type="strand" evidence="3">
    <location>
        <begin position="162"/>
        <end position="169"/>
    </location>
</feature>
<feature type="strand" evidence="3">
    <location>
        <begin position="172"/>
        <end position="178"/>
    </location>
</feature>
<feature type="strand" evidence="3">
    <location>
        <begin position="184"/>
        <end position="187"/>
    </location>
</feature>
<feature type="strand" evidence="3">
    <location>
        <begin position="191"/>
        <end position="200"/>
    </location>
</feature>
<feature type="strand" evidence="3">
    <location>
        <begin position="205"/>
        <end position="210"/>
    </location>
</feature>
<feature type="strand" evidence="3">
    <location>
        <begin position="222"/>
        <end position="225"/>
    </location>
</feature>
<keyword id="KW-0002">3D-structure</keyword>
<keyword id="KW-0134">Cell wall</keyword>
<keyword id="KW-1185">Reference proteome</keyword>
<keyword id="KW-0964">Secreted</keyword>
<keyword id="KW-0732">Signal</keyword>
<name>YOAJ_BACSU</name>
<protein>
    <recommendedName>
        <fullName>Expansin-YoaJ</fullName>
    </recommendedName>
    <alternativeName>
        <fullName>EXLX1</fullName>
    </alternativeName>
</protein>
<dbReference type="EMBL" id="AF027868">
    <property type="protein sequence ID" value="AAB84448.1"/>
    <property type="molecule type" value="Genomic_DNA"/>
</dbReference>
<dbReference type="EMBL" id="AL009126">
    <property type="protein sequence ID" value="CAB13755.1"/>
    <property type="molecule type" value="Genomic_DNA"/>
</dbReference>
<dbReference type="PIR" id="D69896">
    <property type="entry name" value="D69896"/>
</dbReference>
<dbReference type="RefSeq" id="WP_003231419.1">
    <property type="nucleotide sequence ID" value="NZ_OZ025638.1"/>
</dbReference>
<dbReference type="PDB" id="2BH0">
    <property type="method" value="X-ray"/>
    <property type="resolution" value="2.50 A"/>
    <property type="chains" value="A=26-232"/>
</dbReference>
<dbReference type="PDB" id="3D30">
    <property type="method" value="X-ray"/>
    <property type="resolution" value="1.90 A"/>
    <property type="chains" value="A=26-232"/>
</dbReference>
<dbReference type="PDB" id="4FER">
    <property type="method" value="X-ray"/>
    <property type="resolution" value="2.10 A"/>
    <property type="chains" value="A/B=26-232"/>
</dbReference>
<dbReference type="PDB" id="4FFT">
    <property type="method" value="X-ray"/>
    <property type="resolution" value="2.10 A"/>
    <property type="chains" value="A/B=26-232"/>
</dbReference>
<dbReference type="PDB" id="4FG2">
    <property type="method" value="X-ray"/>
    <property type="resolution" value="2.10 A"/>
    <property type="chains" value="A/B=26-232"/>
</dbReference>
<dbReference type="PDB" id="4FG4">
    <property type="method" value="X-ray"/>
    <property type="resolution" value="2.70 A"/>
    <property type="chains" value="A/B=26-232"/>
</dbReference>
<dbReference type="PDBsum" id="2BH0"/>
<dbReference type="PDBsum" id="3D30"/>
<dbReference type="PDBsum" id="4FER"/>
<dbReference type="PDBsum" id="4FFT"/>
<dbReference type="PDBsum" id="4FG2"/>
<dbReference type="PDBsum" id="4FG4"/>
<dbReference type="SMR" id="O34918"/>
<dbReference type="FunCoup" id="O34918">
    <property type="interactions" value="3"/>
</dbReference>
<dbReference type="STRING" id="224308.BSU18630"/>
<dbReference type="CAZy" id="CBM63">
    <property type="family name" value="Carbohydrate-Binding Module Family 63"/>
</dbReference>
<dbReference type="PaxDb" id="224308-BSU18630"/>
<dbReference type="EnsemblBacteria" id="CAB13755">
    <property type="protein sequence ID" value="CAB13755"/>
    <property type="gene ID" value="BSU_18630"/>
</dbReference>
<dbReference type="GeneID" id="940108"/>
<dbReference type="KEGG" id="bsu:BSU18630"/>
<dbReference type="PATRIC" id="fig|224308.179.peg.2031"/>
<dbReference type="eggNOG" id="COG4305">
    <property type="taxonomic scope" value="Bacteria"/>
</dbReference>
<dbReference type="InParanoid" id="O34918"/>
<dbReference type="OrthoDB" id="5499927at2"/>
<dbReference type="BioCyc" id="BSUB:BSU18630-MONOMER"/>
<dbReference type="EvolutionaryTrace" id="O34918"/>
<dbReference type="Proteomes" id="UP000001570">
    <property type="component" value="Chromosome"/>
</dbReference>
<dbReference type="GO" id="GO:0005576">
    <property type="term" value="C:extracellular region"/>
    <property type="evidence" value="ECO:0007669"/>
    <property type="project" value="UniProtKB-KW"/>
</dbReference>
<dbReference type="CDD" id="cd22272">
    <property type="entry name" value="DPBB_EXLX1-like"/>
    <property type="match status" value="1"/>
</dbReference>
<dbReference type="Gene3D" id="2.60.40.760">
    <property type="entry name" value="Expansin, cellulose-binding-like domain"/>
    <property type="match status" value="1"/>
</dbReference>
<dbReference type="Gene3D" id="2.40.40.10">
    <property type="entry name" value="RlpA-like domain"/>
    <property type="match status" value="1"/>
</dbReference>
<dbReference type="InterPro" id="IPR036749">
    <property type="entry name" value="Expansin_CBD_sf"/>
</dbReference>
<dbReference type="InterPro" id="IPR051477">
    <property type="entry name" value="Expansin_CellWall"/>
</dbReference>
<dbReference type="InterPro" id="IPR049818">
    <property type="entry name" value="Expansin_EXLX1-like"/>
</dbReference>
<dbReference type="InterPro" id="IPR009009">
    <property type="entry name" value="RlpA-like_DPBB"/>
</dbReference>
<dbReference type="InterPro" id="IPR036908">
    <property type="entry name" value="RlpA-like_sf"/>
</dbReference>
<dbReference type="NCBIfam" id="NF041144">
    <property type="entry name" value="expansin_EXLX1"/>
    <property type="match status" value="1"/>
</dbReference>
<dbReference type="PANTHER" id="PTHR31836">
    <property type="match status" value="1"/>
</dbReference>
<dbReference type="PANTHER" id="PTHR31836:SF21">
    <property type="entry name" value="EXPANSIN-LIKE PROTEIN 7"/>
    <property type="match status" value="1"/>
</dbReference>
<dbReference type="Pfam" id="PF03330">
    <property type="entry name" value="DPBB_1"/>
    <property type="match status" value="1"/>
</dbReference>
<dbReference type="SUPFAM" id="SSF50685">
    <property type="entry name" value="Barwin-like endoglucanases"/>
    <property type="match status" value="1"/>
</dbReference>
<dbReference type="SUPFAM" id="SSF49590">
    <property type="entry name" value="PHL pollen allergen"/>
    <property type="match status" value="1"/>
</dbReference>
<accession>O34918</accession>
<accession>Q796F6</accession>
<comment type="function">
    <text evidence="2">May promote colonization of plant roots. May cause loosening and extension of plant cell walls by disrupting non-covalent bonding between cellulose microfibrils and matrix glucans. Has very low expansin activity (in vitro). No enzymatic activity has been found. Binds to peptidoglycan and to plant cell walls.</text>
</comment>
<comment type="subcellular location">
    <subcellularLocation>
        <location evidence="2">Secreted</location>
        <location evidence="2">Cell wall</location>
    </subcellularLocation>
</comment>
<gene>
    <name type="primary">yoaJ</name>
    <name type="ordered locus">BSU18630</name>
</gene>